<dbReference type="EMBL" id="CR380956">
    <property type="protein sequence ID" value="CAG60798.1"/>
    <property type="molecule type" value="Genomic_DNA"/>
</dbReference>
<dbReference type="RefSeq" id="XP_447849.1">
    <property type="nucleotide sequence ID" value="XM_447849.1"/>
</dbReference>
<dbReference type="FunCoup" id="Q6FPJ5">
    <property type="interactions" value="25"/>
</dbReference>
<dbReference type="STRING" id="284593.Q6FPJ5"/>
<dbReference type="EnsemblFungi" id="CAGL0J03322g-T">
    <property type="protein sequence ID" value="CAGL0J03322g-T-p1"/>
    <property type="gene ID" value="CAGL0J03322g"/>
</dbReference>
<dbReference type="GeneID" id="2889689"/>
<dbReference type="KEGG" id="cgr:2889689"/>
<dbReference type="CGD" id="CAL0133640">
    <property type="gene designation" value="FMP29"/>
</dbReference>
<dbReference type="VEuPathDB" id="FungiDB:CAGL0J03322g"/>
<dbReference type="eggNOG" id="ENOG502QV1E">
    <property type="taxonomic scope" value="Eukaryota"/>
</dbReference>
<dbReference type="HOGENOM" id="CLU_019189_0_1_1"/>
<dbReference type="InParanoid" id="Q6FPJ5"/>
<dbReference type="OMA" id="GWIPQDM"/>
<dbReference type="Proteomes" id="UP000002428">
    <property type="component" value="Chromosome J"/>
</dbReference>
<dbReference type="GO" id="GO:0005739">
    <property type="term" value="C:mitochondrion"/>
    <property type="evidence" value="ECO:0007669"/>
    <property type="project" value="UniProtKB-SubCell"/>
</dbReference>
<dbReference type="Gene3D" id="3.30.200.20">
    <property type="entry name" value="Phosphorylase Kinase, domain 1"/>
    <property type="match status" value="1"/>
</dbReference>
<dbReference type="InterPro" id="IPR011009">
    <property type="entry name" value="Kinase-like_dom_sf"/>
</dbReference>
<dbReference type="InterPro" id="IPR051035">
    <property type="entry name" value="Mito_inheritance_9"/>
</dbReference>
<dbReference type="PANTHER" id="PTHR36091">
    <property type="entry name" value="ALTERED INHERITANCE OF MITOCHONDRIA PROTEIN 9, MITOCHONDRIAL"/>
    <property type="match status" value="1"/>
</dbReference>
<dbReference type="PANTHER" id="PTHR36091:SF1">
    <property type="entry name" value="ALTERED INHERITANCE OF MITOCHONDRIA PROTEIN 9, MITOCHONDRIAL"/>
    <property type="match status" value="1"/>
</dbReference>
<dbReference type="SUPFAM" id="SSF56112">
    <property type="entry name" value="Protein kinase-like (PK-like)"/>
    <property type="match status" value="1"/>
</dbReference>
<comment type="subcellular location">
    <subcellularLocation>
        <location evidence="1">Mitochondrion</location>
    </subcellularLocation>
</comment>
<comment type="similarity">
    <text evidence="3">Belongs to the AIM9 family.</text>
</comment>
<proteinExistence type="inferred from homology"/>
<gene>
    <name type="primary">AIM9</name>
    <name type="synonym">FMP29</name>
    <name type="ordered locus">CAGL0J03322g</name>
</gene>
<protein>
    <recommendedName>
        <fullName>Altered inheritance of mitochondria protein 9, mitochondrial</fullName>
    </recommendedName>
    <alternativeName>
        <fullName>Found in mitochondrial proteome protein 29</fullName>
    </alternativeName>
</protein>
<feature type="transit peptide" description="Mitochondrion" evidence="2">
    <location>
        <begin position="1"/>
        <end position="34"/>
    </location>
</feature>
<feature type="chain" id="PRO_0000408719" description="Altered inheritance of mitochondria protein 9, mitochondrial">
    <location>
        <begin position="35"/>
        <end position="646"/>
    </location>
</feature>
<keyword id="KW-0496">Mitochondrion</keyword>
<keyword id="KW-1185">Reference proteome</keyword>
<keyword id="KW-0809">Transit peptide</keyword>
<accession>Q6FPJ5</accession>
<sequence length="646" mass="73805">MLRIPSRIGSRQVLACAGRNLKCGSVMRHISRRNISKEPEKVYTNLADVNDPKRDQFFKYTWGTWLQNDKLEKDKRTTKFSLNGLNSVLDDIYRQATKNTKDNFKSETEIVPQPLTNKNRTVSMPNNIAITKLGTLNPNEKSVTIKTIASVHEGKHHRIYKVQTNLSDEKSFVLRIPYQLDDDKATISHRIRSEVATLDFLDLQLKMKVPKVICYAADDGNPLGVPFILQEYIDGSLLMKDWNPLMDDKALMVETGEGSTENPELASLNKVVKSMADFHAKLNSISFNAAGSIYFKNDSNLNSETVIDNISNDLASNLKDRWVLGPSVERRLWKKKSDLAIEERLKYLGPWKEDKETSISAQILRDTAILELKNAEARLAKSEQNGSKDKNTETLIKKQIETFQNVEKISGDLISSEMKAIPNIKDLLKPTIFHPDLDPMNVLIENKTETPFMLDLEGAVVKPFILQSSPQFVAYDGPKIYNMKSDIPEFEKLSEEERKHYEFMYKRTRNQFLWEKAVNERLPNLIMTVAPPVKVLRRPYTAVLEQKTDNDYILVDDSFFQLREAWAFFFKNGLVTKEEFPLTFTDEQVKQHADDLNSLHEKLVSTPFAATQGWVPQDMFDNLVRAGVIIKDSTGNFTVNDINPSA</sequence>
<evidence type="ECO:0000250" key="1"/>
<evidence type="ECO:0000255" key="2"/>
<evidence type="ECO:0000305" key="3"/>
<organism>
    <name type="scientific">Candida glabrata (strain ATCC 2001 / BCRC 20586 / JCM 3761 / NBRC 0622 / NRRL Y-65 / CBS 138)</name>
    <name type="common">Yeast</name>
    <name type="synonym">Nakaseomyces glabratus</name>
    <dbReference type="NCBI Taxonomy" id="284593"/>
    <lineage>
        <taxon>Eukaryota</taxon>
        <taxon>Fungi</taxon>
        <taxon>Dikarya</taxon>
        <taxon>Ascomycota</taxon>
        <taxon>Saccharomycotina</taxon>
        <taxon>Saccharomycetes</taxon>
        <taxon>Saccharomycetales</taxon>
        <taxon>Saccharomycetaceae</taxon>
        <taxon>Nakaseomyces</taxon>
    </lineage>
</organism>
<name>AIM9_CANGA</name>
<reference key="1">
    <citation type="journal article" date="2004" name="Nature">
        <title>Genome evolution in yeasts.</title>
        <authorList>
            <person name="Dujon B."/>
            <person name="Sherman D."/>
            <person name="Fischer G."/>
            <person name="Durrens P."/>
            <person name="Casaregola S."/>
            <person name="Lafontaine I."/>
            <person name="de Montigny J."/>
            <person name="Marck C."/>
            <person name="Neuveglise C."/>
            <person name="Talla E."/>
            <person name="Goffard N."/>
            <person name="Frangeul L."/>
            <person name="Aigle M."/>
            <person name="Anthouard V."/>
            <person name="Babour A."/>
            <person name="Barbe V."/>
            <person name="Barnay S."/>
            <person name="Blanchin S."/>
            <person name="Beckerich J.-M."/>
            <person name="Beyne E."/>
            <person name="Bleykasten C."/>
            <person name="Boisrame A."/>
            <person name="Boyer J."/>
            <person name="Cattolico L."/>
            <person name="Confanioleri F."/>
            <person name="de Daruvar A."/>
            <person name="Despons L."/>
            <person name="Fabre E."/>
            <person name="Fairhead C."/>
            <person name="Ferry-Dumazet H."/>
            <person name="Groppi A."/>
            <person name="Hantraye F."/>
            <person name="Hennequin C."/>
            <person name="Jauniaux N."/>
            <person name="Joyet P."/>
            <person name="Kachouri R."/>
            <person name="Kerrest A."/>
            <person name="Koszul R."/>
            <person name="Lemaire M."/>
            <person name="Lesur I."/>
            <person name="Ma L."/>
            <person name="Muller H."/>
            <person name="Nicaud J.-M."/>
            <person name="Nikolski M."/>
            <person name="Oztas S."/>
            <person name="Ozier-Kalogeropoulos O."/>
            <person name="Pellenz S."/>
            <person name="Potier S."/>
            <person name="Richard G.-F."/>
            <person name="Straub M.-L."/>
            <person name="Suleau A."/>
            <person name="Swennen D."/>
            <person name="Tekaia F."/>
            <person name="Wesolowski-Louvel M."/>
            <person name="Westhof E."/>
            <person name="Wirth B."/>
            <person name="Zeniou-Meyer M."/>
            <person name="Zivanovic Y."/>
            <person name="Bolotin-Fukuhara M."/>
            <person name="Thierry A."/>
            <person name="Bouchier C."/>
            <person name="Caudron B."/>
            <person name="Scarpelli C."/>
            <person name="Gaillardin C."/>
            <person name="Weissenbach J."/>
            <person name="Wincker P."/>
            <person name="Souciet J.-L."/>
        </authorList>
    </citation>
    <scope>NUCLEOTIDE SEQUENCE [LARGE SCALE GENOMIC DNA]</scope>
    <source>
        <strain>ATCC 2001 / BCRC 20586 / JCM 3761 / NBRC 0622 / NRRL Y-65 / CBS 138</strain>
    </source>
</reference>